<organism>
    <name type="scientific">Duvenhage virus</name>
    <name type="common">DUVV</name>
    <dbReference type="NCBI Taxonomy" id="38767"/>
    <lineage>
        <taxon>Viruses</taxon>
        <taxon>Riboviria</taxon>
        <taxon>Orthornavirae</taxon>
        <taxon>Negarnaviricota</taxon>
        <taxon>Haploviricotina</taxon>
        <taxon>Monjiviricetes</taxon>
        <taxon>Mononegavirales</taxon>
        <taxon>Rhabdoviridae</taxon>
        <taxon>Alpharhabdovirinae</taxon>
        <taxon>Lyssavirus</taxon>
    </lineage>
</organism>
<organismHost>
    <name type="scientific">Homo sapiens</name>
    <name type="common">Human</name>
    <dbReference type="NCBI Taxonomy" id="9606"/>
</organismHost>
<organismHost>
    <name type="scientific">Mammalia</name>
    <dbReference type="NCBI Taxonomy" id="40674"/>
</organismHost>
<name>PHOSP_DUVV</name>
<reference key="1">
    <citation type="journal article" date="2002" name="Virology">
        <title>Lyssavirus P gene characterisation provides insights into the phylogeny of the genus and identifies structural similarities and diversity within the encoded phosphoprotein.</title>
        <authorList>
            <person name="Nadin-Davis S.A."/>
            <person name="Abdel-Malik M."/>
            <person name="Armstrong J."/>
            <person name="Wandeler A.I."/>
        </authorList>
    </citation>
    <scope>NUCLEOTIDE SEQUENCE [MRNA]</scope>
    <source>
        <strain>Isolate Human/South Africa/V008/1988</strain>
    </source>
</reference>
<comment type="function">
    <text evidence="1">Non catalytic polymerase cofactor and regulatory protein that plays a role in viral transcription and replication. Stabilizes the RNA polymerase L to the N-RNA template and binds the soluble protein N, preventing it from encapsidating non-genomic RNA. Also inhibits host IFN-alpha and IFN-beta signaling by binding and retaining phosphorylated STAT1 in the cytoplasm or by inhibiting the DNA binding of STAT1 in the nucleus (By similarity).</text>
</comment>
<comment type="subunit">
    <text evidence="1">Homotrimer when phosphorylated. This trimer is stabilized by binding to the L protein. Binds soluble protein N, and ribonucleocapsid. Interacts with host STAT1, STAT2, DYNLL1, DYNLL2 and PML. Isoform P3 binds host PML (By similarity).</text>
</comment>
<comment type="subcellular location">
    <molecule>Phosphoprotein</molecule>
    <subcellularLocation>
        <location>Virion</location>
    </subcellularLocation>
    <subcellularLocation>
        <location evidence="1">Host cytoplasm</location>
    </subcellularLocation>
</comment>
<comment type="subcellular location">
    <molecule>Isoform P2</molecule>
    <subcellularLocation>
        <location evidence="1">Host cytoplasm</location>
    </subcellularLocation>
</comment>
<comment type="subcellular location">
    <molecule>Isoform P4</molecule>
    <subcellularLocation>
        <location evidence="1">Host nucleus</location>
    </subcellularLocation>
</comment>
<comment type="alternative products">
    <event type="alternative initiation"/>
    <isoform>
        <id>O56774-1</id>
        <name>P</name>
        <sequence type="displayed"/>
    </isoform>
    <isoform>
        <id>O56774-2</id>
        <name>P2</name>
        <sequence type="described" ref="VSP_027555"/>
    </isoform>
    <isoform>
        <id>O56774-3</id>
        <name>P4</name>
        <sequence type="described" ref="VSP_027554"/>
    </isoform>
</comment>
<comment type="PTM">
    <text evidence="1">Phosphorylated by host PKC and by an unknown kinase.</text>
</comment>
<comment type="similarity">
    <text evidence="3">Belongs to the lyssavirus protein P family.</text>
</comment>
<evidence type="ECO:0000250" key="1"/>
<evidence type="ECO:0000256" key="2">
    <source>
        <dbReference type="SAM" id="MobiDB-lite"/>
    </source>
</evidence>
<evidence type="ECO:0000305" key="3"/>
<evidence type="ECO:0007829" key="4">
    <source>
        <dbReference type="PDB" id="7C21"/>
    </source>
</evidence>
<proteinExistence type="evidence at protein level"/>
<protein>
    <recommendedName>
        <fullName>Phosphoprotein</fullName>
        <shortName>Protein P</shortName>
    </recommendedName>
    <alternativeName>
        <fullName>Protein M1</fullName>
    </alternativeName>
</protein>
<accession>O56774</accession>
<keyword id="KW-0002">3D-structure</keyword>
<keyword id="KW-0024">Alternative initiation</keyword>
<keyword id="KW-0143">Chaperone</keyword>
<keyword id="KW-1035">Host cytoplasm</keyword>
<keyword id="KW-1048">Host nucleus</keyword>
<keyword id="KW-0945">Host-virus interaction</keyword>
<keyword id="KW-1090">Inhibition of host innate immune response by virus</keyword>
<keyword id="KW-1114">Inhibition of host interferon signaling pathway by virus</keyword>
<keyword id="KW-1105">Inhibition of host STAT1 by virus</keyword>
<keyword id="KW-1106">Inhibition of host STAT2 by virus</keyword>
<keyword id="KW-0922">Interferon antiviral system evasion</keyword>
<keyword id="KW-0597">Phosphoprotein</keyword>
<keyword id="KW-0899">Viral immunoevasion</keyword>
<keyword id="KW-0693">Viral RNA replication</keyword>
<keyword id="KW-0946">Virion</keyword>
<gene>
    <name type="primary">P</name>
</gene>
<feature type="chain" id="PRO_0000299094" description="Phosphoprotein">
    <location>
        <begin position="1"/>
        <end position="298"/>
    </location>
</feature>
<feature type="region of interest" description="Disordered" evidence="2">
    <location>
        <begin position="148"/>
        <end position="184"/>
    </location>
</feature>
<feature type="short sequence motif" description="Nuclear export signal" evidence="1">
    <location>
        <begin position="49"/>
        <end position="58"/>
    </location>
</feature>
<feature type="short sequence motif" description="Nuclear localization signal" evidence="1">
    <location>
        <begin position="212"/>
        <end position="215"/>
    </location>
</feature>
<feature type="compositionally biased region" description="Polar residues" evidence="2">
    <location>
        <begin position="148"/>
        <end position="162"/>
    </location>
</feature>
<feature type="compositionally biased region" description="Polar residues" evidence="2">
    <location>
        <begin position="169"/>
        <end position="178"/>
    </location>
</feature>
<feature type="modified residue" description="Phosphoserine; by host" evidence="1">
    <location>
        <position position="64"/>
    </location>
</feature>
<feature type="modified residue" description="Phosphoserine; by host PKC" evidence="1">
    <location>
        <position position="211"/>
    </location>
</feature>
<feature type="modified residue" description="Phosphoserine; by host PKC" evidence="1">
    <location>
        <position position="272"/>
    </location>
</feature>
<feature type="splice variant" id="VSP_027554" description="In isoform P4." evidence="3">
    <location>
        <begin position="1"/>
        <end position="68"/>
    </location>
</feature>
<feature type="splice variant" id="VSP_027555" description="In isoform P2." evidence="3">
    <location>
        <begin position="1"/>
        <end position="19"/>
    </location>
</feature>
<feature type="helix" evidence="4">
    <location>
        <begin position="194"/>
        <end position="208"/>
    </location>
</feature>
<feature type="turn" evidence="4">
    <location>
        <begin position="209"/>
        <end position="211"/>
    </location>
</feature>
<feature type="strand" evidence="4">
    <location>
        <begin position="214"/>
        <end position="226"/>
    </location>
</feature>
<feature type="helix" evidence="4">
    <location>
        <begin position="228"/>
        <end position="231"/>
    </location>
</feature>
<feature type="helix" evidence="4">
    <location>
        <begin position="235"/>
        <end position="242"/>
    </location>
</feature>
<feature type="helix" evidence="4">
    <location>
        <begin position="248"/>
        <end position="253"/>
    </location>
</feature>
<feature type="helix" evidence="4">
    <location>
        <begin position="260"/>
        <end position="271"/>
    </location>
</feature>
<feature type="helix" evidence="4">
    <location>
        <begin position="273"/>
        <end position="278"/>
    </location>
</feature>
<feature type="helix" evidence="4">
    <location>
        <begin position="281"/>
        <end position="295"/>
    </location>
</feature>
<sequence length="298" mass="33674">MSKIFINPSDIRSGLADLEMAEETVELVNRNMEDSQAHLQGVPIDVETLPEDIQRLHITDPQASLRQDMVDEQKHQEDEDFYLTGRENPLSPFQTHLDAIGLRIVRKMKTGEGFFKIWSQAVEDIVSYVALNFSIPVNKLFEDKSTQTVTEKSQQASASSAPNRHEKSSQNARVNSKDASGPAALDWTASNEADDESVEAEIAHQIAESFSKKYKFPSRSSGIFLWNFEQLKMNLDEIVREVKEIPGVIKMAKDGMKLPLRCMLGGVASTHSRRFQILVNPEKLGKVMQEDLDKYLTY</sequence>
<dbReference type="EMBL" id="AF049115">
    <property type="protein sequence ID" value="AAC04585.1"/>
    <property type="molecule type" value="mRNA"/>
</dbReference>
<dbReference type="RefSeq" id="YP_007641403.1">
    <molecule id="O56774-1"/>
    <property type="nucleotide sequence ID" value="NC_020810.1"/>
</dbReference>
<dbReference type="PDB" id="7C21">
    <property type="method" value="X-ray"/>
    <property type="resolution" value="1.95 A"/>
    <property type="chains" value="A=187-298"/>
</dbReference>
<dbReference type="PDBsum" id="7C21"/>
<dbReference type="SMR" id="O56774"/>
<dbReference type="GeneID" id="14857938"/>
<dbReference type="KEGG" id="vg:14857938"/>
<dbReference type="OrthoDB" id="6918at10239"/>
<dbReference type="GO" id="GO:0030430">
    <property type="term" value="C:host cell cytoplasm"/>
    <property type="evidence" value="ECO:0007669"/>
    <property type="project" value="UniProtKB-SubCell"/>
</dbReference>
<dbReference type="GO" id="GO:0042025">
    <property type="term" value="C:host cell nucleus"/>
    <property type="evidence" value="ECO:0007669"/>
    <property type="project" value="UniProtKB-SubCell"/>
</dbReference>
<dbReference type="GO" id="GO:0044423">
    <property type="term" value="C:virion component"/>
    <property type="evidence" value="ECO:0007669"/>
    <property type="project" value="UniProtKB-KW"/>
</dbReference>
<dbReference type="GO" id="GO:0003968">
    <property type="term" value="F:RNA-directed RNA polymerase activity"/>
    <property type="evidence" value="ECO:0007669"/>
    <property type="project" value="InterPro"/>
</dbReference>
<dbReference type="GO" id="GO:0052170">
    <property type="term" value="P:symbiont-mediated suppression of host innate immune response"/>
    <property type="evidence" value="ECO:0007669"/>
    <property type="project" value="UniProtKB-KW"/>
</dbReference>
<dbReference type="GO" id="GO:0039563">
    <property type="term" value="P:symbiont-mediated suppression of host JAK-STAT cascade via inhibition of STAT1 activity"/>
    <property type="evidence" value="ECO:0007669"/>
    <property type="project" value="UniProtKB-KW"/>
</dbReference>
<dbReference type="GO" id="GO:0039564">
    <property type="term" value="P:symbiont-mediated suppression of host JAK-STAT cascade via inhibition of STAT2 activity"/>
    <property type="evidence" value="ECO:0007669"/>
    <property type="project" value="UniProtKB-KW"/>
</dbReference>
<dbReference type="GO" id="GO:0039502">
    <property type="term" value="P:symbiont-mediated suppression of host type I interferon-mediated signaling pathway"/>
    <property type="evidence" value="ECO:0007669"/>
    <property type="project" value="UniProtKB-KW"/>
</dbReference>
<dbReference type="GO" id="GO:0019083">
    <property type="term" value="P:viral transcription"/>
    <property type="evidence" value="ECO:0007669"/>
    <property type="project" value="InterPro"/>
</dbReference>
<dbReference type="Gene3D" id="6.10.140.1560">
    <property type="match status" value="1"/>
</dbReference>
<dbReference type="Gene3D" id="1.20.120.820">
    <property type="entry name" value="Phosphoprotein, C-terminal domain"/>
    <property type="match status" value="1"/>
</dbReference>
<dbReference type="InterPro" id="IPR004259">
    <property type="entry name" value="PP_M1-like"/>
</dbReference>
<dbReference type="InterPro" id="IPR037199">
    <property type="entry name" value="PP_M1_C"/>
</dbReference>
<dbReference type="Pfam" id="PF03012">
    <property type="entry name" value="PP_M1"/>
    <property type="match status" value="1"/>
</dbReference>
<dbReference type="SUPFAM" id="SSF118173">
    <property type="entry name" value="Phosphoprotein M1, C-terminal domain"/>
    <property type="match status" value="1"/>
</dbReference>